<evidence type="ECO:0000255" key="1"/>
<evidence type="ECO:0000256" key="2">
    <source>
        <dbReference type="SAM" id="MobiDB-lite"/>
    </source>
</evidence>
<evidence type="ECO:0000305" key="3"/>
<comment type="catalytic activity">
    <reaction>
        <text>oxaloacetate + ATP = phosphoenolpyruvate + ADP + CO2</text>
        <dbReference type="Rhea" id="RHEA:18617"/>
        <dbReference type="ChEBI" id="CHEBI:16452"/>
        <dbReference type="ChEBI" id="CHEBI:16526"/>
        <dbReference type="ChEBI" id="CHEBI:30616"/>
        <dbReference type="ChEBI" id="CHEBI:58702"/>
        <dbReference type="ChEBI" id="CHEBI:456216"/>
        <dbReference type="EC" id="4.1.1.49"/>
    </reaction>
</comment>
<comment type="pathway">
    <text>Carbohydrate biosynthesis; gluconeogenesis.</text>
</comment>
<comment type="similarity">
    <text evidence="3">Belongs to the phosphoenolpyruvate carboxykinase (ATP) family.</text>
</comment>
<protein>
    <recommendedName>
        <fullName>Phosphoenolpyruvate carboxykinase (ATP)</fullName>
        <ecNumber>4.1.1.49</ecNumber>
    </recommendedName>
</protein>
<accession>O13434</accession>
<sequence>MAPPTAVGSSINFEGHPTIKSTQDPLVQKLSLNTDTVIRHNAPPPTLYEDGLLEKGTTISSTGALMAYSGNKTGRSPKDKRIVDESTSSHNIWWGPVNKQVGELTWEISRSRALDYLRTREKLFVVDAYAGWDPSYRIKVRIICARAYHALFMTNMLIRPTEEELKNFGEPDFTIYNAGQFPANIHTKGMTSATSVEINFKDMEMVILGTEYAGEMKKGIFTVMFYLMPIKHKVLTLHSSCNQGVEKGDVTLFFGLSGTGKTTLSADPQRKLIGDDEHCWSDNGVFNIEGGCYAKCLDLSAEKEPEIFNSIKFGAILENVVYXXITKVVDYGDSSITENTRCAYPIDFIPSAKIPCLPTPIPQYYLLTCDASGVLATVSKLTNAQVMYHFISGYTSKMAGSEEGVTEPHATFSACFGQPFLVLHPMKYAQQLADKISEHNANAWLLNTGWVGSSVAQGGGKRCPLKYTRAILDAIHSGELSKVEYEKVPVFNLNVPTSCPGVPSEILNPTKAWTQGTDSFNKEIKSLATKFAENFKTYADQATAEVKAAGPEA</sequence>
<organism>
    <name type="scientific">Candida albicans</name>
    <name type="common">Yeast</name>
    <dbReference type="NCBI Taxonomy" id="5476"/>
    <lineage>
        <taxon>Eukaryota</taxon>
        <taxon>Fungi</taxon>
        <taxon>Dikarya</taxon>
        <taxon>Ascomycota</taxon>
        <taxon>Saccharomycotina</taxon>
        <taxon>Pichiomycetes</taxon>
        <taxon>Debaryomycetaceae</taxon>
        <taxon>Candida/Lodderomyces clade</taxon>
        <taxon>Candida</taxon>
    </lineage>
</organism>
<name>PCKA_CANAX</name>
<reference key="1">
    <citation type="journal article" date="1997" name="Gene">
        <title>Sequence and promoter regulation of the PCK1 gene encoding phosphoenolpyruvate carboxykinase of the fungal pathogen Candida albicans.</title>
        <authorList>
            <person name="Leuker C.E."/>
            <person name="Sonneborn A."/>
            <person name="Delbruck S."/>
            <person name="Ernst J.F."/>
        </authorList>
    </citation>
    <scope>NUCLEOTIDE SEQUENCE [GENOMIC DNA]</scope>
    <source>
        <strain>SGY243</strain>
    </source>
</reference>
<dbReference type="EC" id="4.1.1.49"/>
<dbReference type="EMBL" id="U70473">
    <property type="protein sequence ID" value="AAC49763.1"/>
    <property type="molecule type" value="Genomic_DNA"/>
</dbReference>
<dbReference type="VEuPathDB" id="FungiDB:CAWG_01381"/>
<dbReference type="VEuPathDB" id="FungiDB:CR_00200W_A"/>
<dbReference type="UniPathway" id="UPA00138"/>
<dbReference type="GO" id="GO:0005829">
    <property type="term" value="C:cytosol"/>
    <property type="evidence" value="ECO:0007669"/>
    <property type="project" value="EnsemblFungi"/>
</dbReference>
<dbReference type="GO" id="GO:0005524">
    <property type="term" value="F:ATP binding"/>
    <property type="evidence" value="ECO:0007669"/>
    <property type="project" value="UniProtKB-KW"/>
</dbReference>
<dbReference type="GO" id="GO:0004612">
    <property type="term" value="F:phosphoenolpyruvate carboxykinase (ATP) activity"/>
    <property type="evidence" value="ECO:0007669"/>
    <property type="project" value="UniProtKB-EC"/>
</dbReference>
<dbReference type="GO" id="GO:0006094">
    <property type="term" value="P:gluconeogenesis"/>
    <property type="evidence" value="ECO:0007669"/>
    <property type="project" value="UniProtKB-UniPathway"/>
</dbReference>
<dbReference type="CDD" id="cd00484">
    <property type="entry name" value="PEPCK_ATP"/>
    <property type="match status" value="1"/>
</dbReference>
<dbReference type="FunFam" id="2.170.8.10:FF:000001">
    <property type="entry name" value="Phosphoenolpyruvate carboxykinase (ATP)"/>
    <property type="match status" value="1"/>
</dbReference>
<dbReference type="FunFam" id="3.40.449.10:FF:000002">
    <property type="entry name" value="Phosphoenolpyruvate carboxykinase [ATP]"/>
    <property type="match status" value="1"/>
</dbReference>
<dbReference type="Gene3D" id="3.90.228.20">
    <property type="match status" value="1"/>
</dbReference>
<dbReference type="Gene3D" id="3.40.449.10">
    <property type="entry name" value="Phosphoenolpyruvate Carboxykinase, domain 1"/>
    <property type="match status" value="1"/>
</dbReference>
<dbReference type="Gene3D" id="2.170.8.10">
    <property type="entry name" value="Phosphoenolpyruvate Carboxykinase, domain 2"/>
    <property type="match status" value="1"/>
</dbReference>
<dbReference type="HAMAP" id="MF_00453">
    <property type="entry name" value="PEPCK_ATP"/>
    <property type="match status" value="1"/>
</dbReference>
<dbReference type="InterPro" id="IPR001272">
    <property type="entry name" value="PEP_carboxykinase_ATP"/>
</dbReference>
<dbReference type="InterPro" id="IPR013035">
    <property type="entry name" value="PEP_carboxykinase_C"/>
</dbReference>
<dbReference type="InterPro" id="IPR008210">
    <property type="entry name" value="PEP_carboxykinase_N"/>
</dbReference>
<dbReference type="InterPro" id="IPR015994">
    <property type="entry name" value="PEPCK_ATP_CS"/>
</dbReference>
<dbReference type="NCBIfam" id="TIGR00224">
    <property type="entry name" value="pckA"/>
    <property type="match status" value="1"/>
</dbReference>
<dbReference type="NCBIfam" id="NF006820">
    <property type="entry name" value="PRK09344.1-2"/>
    <property type="match status" value="1"/>
</dbReference>
<dbReference type="NCBIfam" id="NF006821">
    <property type="entry name" value="PRK09344.1-3"/>
    <property type="match status" value="1"/>
</dbReference>
<dbReference type="PANTHER" id="PTHR30031:SF0">
    <property type="entry name" value="PHOSPHOENOLPYRUVATE CARBOXYKINASE (ATP)"/>
    <property type="match status" value="1"/>
</dbReference>
<dbReference type="PANTHER" id="PTHR30031">
    <property type="entry name" value="PHOSPHOENOLPYRUVATE CARBOXYKINASE ATP"/>
    <property type="match status" value="1"/>
</dbReference>
<dbReference type="Pfam" id="PF01293">
    <property type="entry name" value="PEPCK_ATP"/>
    <property type="match status" value="1"/>
</dbReference>
<dbReference type="PIRSF" id="PIRSF006294">
    <property type="entry name" value="PEP_crbxkin"/>
    <property type="match status" value="1"/>
</dbReference>
<dbReference type="SUPFAM" id="SSF68923">
    <property type="entry name" value="PEP carboxykinase N-terminal domain"/>
    <property type="match status" value="1"/>
</dbReference>
<dbReference type="SUPFAM" id="SSF53795">
    <property type="entry name" value="PEP carboxykinase-like"/>
    <property type="match status" value="1"/>
</dbReference>
<dbReference type="PROSITE" id="PS00532">
    <property type="entry name" value="PEPCK_ATP"/>
    <property type="match status" value="1"/>
</dbReference>
<keyword id="KW-0067">ATP-binding</keyword>
<keyword id="KW-0210">Decarboxylase</keyword>
<keyword id="KW-0312">Gluconeogenesis</keyword>
<keyword id="KW-0456">Lyase</keyword>
<keyword id="KW-0547">Nucleotide-binding</keyword>
<gene>
    <name type="primary">PCK1</name>
</gene>
<proteinExistence type="inferred from homology"/>
<feature type="chain" id="PRO_0000203870" description="Phosphoenolpyruvate carboxykinase (ATP)">
    <location>
        <begin position="1"/>
        <end position="553"/>
    </location>
</feature>
<feature type="region of interest" description="Disordered" evidence="2">
    <location>
        <begin position="1"/>
        <end position="22"/>
    </location>
</feature>
<feature type="binding site" evidence="1">
    <location>
        <begin position="255"/>
        <end position="262"/>
    </location>
    <ligand>
        <name>ATP</name>
        <dbReference type="ChEBI" id="CHEBI:30616"/>
    </ligand>
</feature>